<feature type="chain" id="PRO_0000449943" description="Protein farnesyltransferase subunit beta">
    <location>
        <begin position="1"/>
        <end position="514"/>
    </location>
</feature>
<feature type="repeat" description="PFTB 1" evidence="3">
    <location>
        <begin position="180"/>
        <end position="221"/>
    </location>
</feature>
<feature type="repeat" description="PFTB 2" evidence="3">
    <location>
        <begin position="231"/>
        <end position="272"/>
    </location>
</feature>
<feature type="repeat" description="PFTB 3" evidence="3">
    <location>
        <begin position="293"/>
        <end position="334"/>
    </location>
</feature>
<feature type="repeat" description="PFTB 4" evidence="3">
    <location>
        <begin position="346"/>
        <end position="388"/>
    </location>
</feature>
<feature type="repeat" description="PFTB 5" evidence="3">
    <location>
        <begin position="410"/>
        <end position="454"/>
    </location>
</feature>
<feature type="region of interest" description="Disordered" evidence="4">
    <location>
        <begin position="1"/>
        <end position="56"/>
    </location>
</feature>
<feature type="compositionally biased region" description="Basic residues" evidence="4">
    <location>
        <begin position="1"/>
        <end position="13"/>
    </location>
</feature>
<feature type="compositionally biased region" description="Low complexity" evidence="4">
    <location>
        <begin position="25"/>
        <end position="39"/>
    </location>
</feature>
<feature type="binding site" evidence="2">
    <location>
        <begin position="319"/>
        <end position="322"/>
    </location>
    <ligand>
        <name>(2E,6E)-farnesyl diphosphate</name>
        <dbReference type="ChEBI" id="CHEBI:175763"/>
    </ligand>
</feature>
<feature type="binding site" evidence="2">
    <location>
        <begin position="367"/>
        <end position="370"/>
    </location>
    <ligand>
        <name>(2E,6E)-farnesyl diphosphate</name>
        <dbReference type="ChEBI" id="CHEBI:175763"/>
    </ligand>
</feature>
<feature type="binding site" evidence="2">
    <location>
        <position position="373"/>
    </location>
    <ligand>
        <name>Zn(2+)</name>
        <dbReference type="ChEBI" id="CHEBI:29105"/>
        <note>catalytic</note>
    </ligand>
</feature>
<feature type="binding site" evidence="2">
    <location>
        <position position="375"/>
    </location>
    <ligand>
        <name>Zn(2+)</name>
        <dbReference type="ChEBI" id="CHEBI:29105"/>
        <note>catalytic</note>
    </ligand>
</feature>
<feature type="binding site" evidence="2">
    <location>
        <begin position="376"/>
        <end position="379"/>
    </location>
    <ligand>
        <name>(2E,6E)-farnesyl diphosphate</name>
        <dbReference type="ChEBI" id="CHEBI:175763"/>
    </ligand>
</feature>
<feature type="binding site" evidence="2">
    <location>
        <position position="442"/>
    </location>
    <ligand>
        <name>Zn(2+)</name>
        <dbReference type="ChEBI" id="CHEBI:29105"/>
        <note>catalytic</note>
    </ligand>
</feature>
<feature type="site" description="Important for selectivity against geranylgeranyl diphosphate" evidence="2">
    <location>
        <position position="159"/>
    </location>
</feature>
<organism>
    <name type="scientific">Pyricularia oryzae (strain 70-15 / ATCC MYA-4617 / FGSC 8958)</name>
    <name type="common">Rice blast fungus</name>
    <name type="synonym">Magnaporthe oryzae</name>
    <dbReference type="NCBI Taxonomy" id="242507"/>
    <lineage>
        <taxon>Eukaryota</taxon>
        <taxon>Fungi</taxon>
        <taxon>Dikarya</taxon>
        <taxon>Ascomycota</taxon>
        <taxon>Pezizomycotina</taxon>
        <taxon>Sordariomycetes</taxon>
        <taxon>Sordariomycetidae</taxon>
        <taxon>Magnaporthales</taxon>
        <taxon>Pyriculariaceae</taxon>
        <taxon>Pyricularia</taxon>
    </lineage>
</organism>
<dbReference type="EC" id="2.5.1.58" evidence="1"/>
<dbReference type="EMBL" id="CM001232">
    <property type="protein sequence ID" value="EHA54398.1"/>
    <property type="molecule type" value="Genomic_DNA"/>
</dbReference>
<dbReference type="RefSeq" id="XP_003714205.1">
    <property type="nucleotide sequence ID" value="XM_003714157.1"/>
</dbReference>
<dbReference type="SMR" id="G4MY67"/>
<dbReference type="FunCoup" id="G4MY67">
    <property type="interactions" value="704"/>
</dbReference>
<dbReference type="STRING" id="242507.G4MY67"/>
<dbReference type="EnsemblFungi" id="MGG_01287T0">
    <property type="protein sequence ID" value="MGG_01287T0"/>
    <property type="gene ID" value="MGG_01287"/>
</dbReference>
<dbReference type="GeneID" id="2679721"/>
<dbReference type="KEGG" id="mgr:MGG_01287"/>
<dbReference type="VEuPathDB" id="FungiDB:MGG_01287"/>
<dbReference type="eggNOG" id="KOG0365">
    <property type="taxonomic scope" value="Eukaryota"/>
</dbReference>
<dbReference type="HOGENOM" id="CLU_028946_1_0_1"/>
<dbReference type="InParanoid" id="G4MY67"/>
<dbReference type="OMA" id="WCIYWIL"/>
<dbReference type="OrthoDB" id="10261146at2759"/>
<dbReference type="BRENDA" id="2.5.1.58">
    <property type="organism ID" value="5238"/>
</dbReference>
<dbReference type="PHI-base" id="PHI:9290"/>
<dbReference type="Proteomes" id="UP000009058">
    <property type="component" value="Chromosome 2"/>
</dbReference>
<dbReference type="GO" id="GO:0005737">
    <property type="term" value="C:cytoplasm"/>
    <property type="evidence" value="ECO:0000314"/>
    <property type="project" value="PHI-base"/>
</dbReference>
<dbReference type="GO" id="GO:0005965">
    <property type="term" value="C:protein farnesyltransferase complex"/>
    <property type="evidence" value="ECO:0007669"/>
    <property type="project" value="InterPro"/>
</dbReference>
<dbReference type="GO" id="GO:0046872">
    <property type="term" value="F:metal ion binding"/>
    <property type="evidence" value="ECO:0007669"/>
    <property type="project" value="UniProtKB-KW"/>
</dbReference>
<dbReference type="GO" id="GO:0004660">
    <property type="term" value="F:protein farnesyltransferase activity"/>
    <property type="evidence" value="ECO:0007669"/>
    <property type="project" value="UniProtKB-EC"/>
</dbReference>
<dbReference type="GO" id="GO:0061951">
    <property type="term" value="P:establishment of protein localization to plasma membrane"/>
    <property type="evidence" value="ECO:0000315"/>
    <property type="project" value="PHI-base"/>
</dbReference>
<dbReference type="CDD" id="cd02893">
    <property type="entry name" value="FTase"/>
    <property type="match status" value="1"/>
</dbReference>
<dbReference type="FunFam" id="1.50.10.20:FF:000014">
    <property type="entry name" value="Protein farnesyltransferase subunit beta"/>
    <property type="match status" value="1"/>
</dbReference>
<dbReference type="Gene3D" id="1.50.10.20">
    <property type="match status" value="1"/>
</dbReference>
<dbReference type="InterPro" id="IPR026872">
    <property type="entry name" value="FTB"/>
</dbReference>
<dbReference type="InterPro" id="IPR045089">
    <property type="entry name" value="PGGT1B-like"/>
</dbReference>
<dbReference type="InterPro" id="IPR001330">
    <property type="entry name" value="Prenyltrans"/>
</dbReference>
<dbReference type="InterPro" id="IPR008930">
    <property type="entry name" value="Terpenoid_cyclase/PrenylTrfase"/>
</dbReference>
<dbReference type="PANTHER" id="PTHR11774">
    <property type="entry name" value="GERANYLGERANYL TRANSFERASE TYPE BETA SUBUNIT"/>
    <property type="match status" value="1"/>
</dbReference>
<dbReference type="PANTHER" id="PTHR11774:SF6">
    <property type="entry name" value="PROTEIN FARNESYLTRANSFERASE SUBUNIT BETA"/>
    <property type="match status" value="1"/>
</dbReference>
<dbReference type="Pfam" id="PF00432">
    <property type="entry name" value="Prenyltrans"/>
    <property type="match status" value="1"/>
</dbReference>
<dbReference type="SUPFAM" id="SSF48239">
    <property type="entry name" value="Terpenoid cyclases/Protein prenyltransferases"/>
    <property type="match status" value="1"/>
</dbReference>
<protein>
    <recommendedName>
        <fullName>Protein farnesyltransferase subunit beta</fullName>
        <shortName>FTase-beta</shortName>
        <shortName>PFTase beta</shortName>
        <ecNumber evidence="1">2.5.1.58</ecNumber>
    </recommendedName>
    <alternativeName>
        <fullName>CAAX farnesyltransferase subunit beta</fullName>
    </alternativeName>
    <alternativeName>
        <fullName>Ras proteins prenyltransferase subunit beta</fullName>
    </alternativeName>
</protein>
<reference key="1">
    <citation type="journal article" date="2005" name="Nature">
        <title>The genome sequence of the rice blast fungus Magnaporthe grisea.</title>
        <authorList>
            <person name="Dean R.A."/>
            <person name="Talbot N.J."/>
            <person name="Ebbole D.J."/>
            <person name="Farman M.L."/>
            <person name="Mitchell T.K."/>
            <person name="Orbach M.J."/>
            <person name="Thon M.R."/>
            <person name="Kulkarni R."/>
            <person name="Xu J.-R."/>
            <person name="Pan H."/>
            <person name="Read N.D."/>
            <person name="Lee Y.-H."/>
            <person name="Carbone I."/>
            <person name="Brown D."/>
            <person name="Oh Y.Y."/>
            <person name="Donofrio N."/>
            <person name="Jeong J.S."/>
            <person name="Soanes D.M."/>
            <person name="Djonovic S."/>
            <person name="Kolomiets E."/>
            <person name="Rehmeyer C."/>
            <person name="Li W."/>
            <person name="Harding M."/>
            <person name="Kim S."/>
            <person name="Lebrun M.-H."/>
            <person name="Bohnert H."/>
            <person name="Coughlan S."/>
            <person name="Butler J."/>
            <person name="Calvo S.E."/>
            <person name="Ma L.-J."/>
            <person name="Nicol R."/>
            <person name="Purcell S."/>
            <person name="Nusbaum C."/>
            <person name="Galagan J.E."/>
            <person name="Birren B.W."/>
        </authorList>
    </citation>
    <scope>NUCLEOTIDE SEQUENCE [LARGE SCALE GENOMIC DNA]</scope>
    <source>
        <strain>70-15 / ATCC MYA-4617 / FGSC 8958</strain>
    </source>
</reference>
<reference key="2">
    <citation type="journal article" date="2019" name="Mol. Plant Pathol.">
        <title>The farnesyltransferase beta-subunit RAM1 regulates localization of RAS proteins and appressorium-mediated infection in Magnaporthe oryzae.</title>
        <authorList>
            <person name="Aboelfotoh Hendy A."/>
            <person name="Xing J."/>
            <person name="Chen X."/>
            <person name="Chen X.L."/>
        </authorList>
    </citation>
    <scope>FUNCTION</scope>
    <scope>SUBCELLULAR LOCATION</scope>
    <scope>DISRUPTION PHENOTYPE</scope>
    <scope>INTERACTION WITH RAS1 AND RAS2</scope>
</reference>
<proteinExistence type="evidence at protein level"/>
<sequence>MRHHTKNLRRRAIFLRTTPRGNMDSSSSVATSTSSSSNHRLVRSSEGSPSAGGDDIEEVIMTPGIATGRVQPAVSVAIPDLFTQLPPVKDDLATSTSKTQDETVAICLPYLAGSDANADVEHNAHGVPHIDRKKHVRFLRNMLRQLPAPFIAADASRPWFLYWSLNAMAILGENVKEDYAESLADTARSMQNESGGFSGGHGQTSHLATTYAVVLALAVVGDEEGLSLIDRRALWKWLCDLKEADGGFRMSLGGEEDVRGAYCAAVIISLLNLPLDLCKDSEAYIRDPTANLFTGLGDYVRKCQTFEGGISGQPDAEAHGAYAFCALGCLSLLGTPSETIPKYLNIERLISWLSSRQYAPEGGFSGRTNKLVDGCYSHWVGGCWPLIEACLNGPVKVSSLDVEPQPLFSREGLMRYILCCCQEQGKRGGLRDKPGKPSDAYHSCYVLSGLSSAQNRWQLVVGDDDMPAWMVSPFPNEEEIFDEKDRVGTVHPVYVIPEDKVAKVQTFFASRDGF</sequence>
<keyword id="KW-0963">Cytoplasm</keyword>
<keyword id="KW-0479">Metal-binding</keyword>
<keyword id="KW-0637">Prenyltransferase</keyword>
<keyword id="KW-1185">Reference proteome</keyword>
<keyword id="KW-0677">Repeat</keyword>
<keyword id="KW-0808">Transferase</keyword>
<keyword id="KW-0862">Zinc</keyword>
<evidence type="ECO:0000250" key="1">
    <source>
        <dbReference type="UniProtKB" id="P22007"/>
    </source>
</evidence>
<evidence type="ECO:0000250" key="2">
    <source>
        <dbReference type="UniProtKB" id="P49356"/>
    </source>
</evidence>
<evidence type="ECO:0000255" key="3"/>
<evidence type="ECO:0000256" key="4">
    <source>
        <dbReference type="SAM" id="MobiDB-lite"/>
    </source>
</evidence>
<evidence type="ECO:0000269" key="5">
    <source>
    </source>
</evidence>
<evidence type="ECO:0000305" key="6"/>
<accession>G4MY67</accession>
<comment type="function">
    <text evidence="5">Catalyzes the transfer of a farnesyl moiety from farnesyl diphosphate to a cysteine at the fourth position from the C-terminus of several proteins having the C-terminal sequence Cys-aliphatic-aliphatic-X. The beta subunit is responsible for peptide-binding.</text>
</comment>
<comment type="catalytic activity">
    <reaction evidence="1">
        <text>L-cysteinyl-[protein] + (2E,6E)-farnesyl diphosphate = S-(2E,6E)-farnesyl-L-cysteinyl-[protein] + diphosphate</text>
        <dbReference type="Rhea" id="RHEA:13345"/>
        <dbReference type="Rhea" id="RHEA-COMP:10131"/>
        <dbReference type="Rhea" id="RHEA-COMP:11535"/>
        <dbReference type="ChEBI" id="CHEBI:29950"/>
        <dbReference type="ChEBI" id="CHEBI:33019"/>
        <dbReference type="ChEBI" id="CHEBI:86019"/>
        <dbReference type="ChEBI" id="CHEBI:175763"/>
        <dbReference type="EC" id="2.5.1.58"/>
    </reaction>
    <physiologicalReaction direction="left-to-right" evidence="1">
        <dbReference type="Rhea" id="RHEA:13346"/>
    </physiologicalReaction>
</comment>
<comment type="cofactor">
    <cofactor evidence="2">
        <name>Zn(2+)</name>
        <dbReference type="ChEBI" id="CHEBI:29105"/>
    </cofactor>
    <text evidence="2">Binds 1 zinc ion per subunit.</text>
</comment>
<comment type="subunit">
    <text evidence="2 5">Heterodimer of an alpha and a beta subunit (By similarity). Interacts with RAS1 and RAS2 (PubMed:31250536).</text>
</comment>
<comment type="subcellular location">
    <subcellularLocation>
        <location evidence="5">Cytoplasm</location>
    </subcellularLocation>
</comment>
<comment type="tissue specificity">
    <text evidence="5">Highly expressed in mycelium, conidium, conidial germination, early formed appressorium and the late infection hypha.</text>
</comment>
<comment type="disruption phenotype">
    <text evidence="5">Shows a significantly reduced endogenous cAMP level. Results in the reduction of hyphal growth and sporulation, and an increase in the sensitivity to various stresses. Attenuates virulence on the plant host by impairing appressorium-mediated penetration and invasive growth.</text>
</comment>
<comment type="similarity">
    <text evidence="6">Belongs to the protein prenyltransferase subunit beta family.</text>
</comment>
<name>FNTB_PYRO7</name>
<gene>
    <name type="primary">RAM1</name>
    <name type="ORF">MGG_01287</name>
</gene>